<protein>
    <recommendedName>
        <fullName>Protein Wnt-7a</fullName>
    </recommendedName>
</protein>
<accession>P28129</accession>
<proteinExistence type="inferred from homology"/>
<gene>
    <name type="primary">WNT7A</name>
</gene>
<reference key="1">
    <citation type="journal article" date="1992" name="Proc. Natl. Acad. Sci. U.S.A.">
        <title>Diversification of the Wnt gene family on the ancestral lineage of vertebrates.</title>
        <authorList>
            <person name="Sidow A."/>
        </authorList>
    </citation>
    <scope>NUCLEOTIDE SEQUENCE [GENOMIC DNA]</scope>
</reference>
<name>WNT7A_MELGA</name>
<evidence type="ECO:0000250" key="1">
    <source>
        <dbReference type="UniProtKB" id="O00755"/>
    </source>
</evidence>
<evidence type="ECO:0000250" key="2">
    <source>
        <dbReference type="UniProtKB" id="P24383"/>
    </source>
</evidence>
<evidence type="ECO:0000250" key="3">
    <source>
        <dbReference type="UniProtKB" id="P27467"/>
    </source>
</evidence>
<evidence type="ECO:0000250" key="4">
    <source>
        <dbReference type="UniProtKB" id="P28026"/>
    </source>
</evidence>
<evidence type="ECO:0000250" key="5">
    <source>
        <dbReference type="UniProtKB" id="P56704"/>
    </source>
</evidence>
<evidence type="ECO:0000255" key="6"/>
<evidence type="ECO:0000305" key="7"/>
<feature type="chain" id="PRO_0000200647" description="Protein Wnt-7a">
    <location>
        <begin position="1" status="less than"/>
        <end position="123" status="greater than"/>
    </location>
</feature>
<feature type="region of interest" description="Disordered linker" evidence="1">
    <location>
        <begin position="33"/>
        <end position="61"/>
    </location>
</feature>
<feature type="lipid moiety-binding region" description="O-palmitoleoyl serine; by PORCN" evidence="5">
    <location>
        <position position="1"/>
    </location>
</feature>
<feature type="glycosylation site" description="N-linked (GlcNAc...) asparagine" evidence="6">
    <location>
        <position position="90"/>
    </location>
</feature>
<feature type="disulfide bond" evidence="4">
    <location>
        <begin position="89"/>
        <end position="104"/>
    </location>
</feature>
<feature type="non-terminal residue">
    <location>
        <position position="1"/>
    </location>
</feature>
<feature type="non-terminal residue">
    <location>
        <position position="123"/>
    </location>
</feature>
<organism>
    <name type="scientific">Meleagris gallopavo</name>
    <name type="common">Wild turkey</name>
    <dbReference type="NCBI Taxonomy" id="9103"/>
    <lineage>
        <taxon>Eukaryota</taxon>
        <taxon>Metazoa</taxon>
        <taxon>Chordata</taxon>
        <taxon>Craniata</taxon>
        <taxon>Vertebrata</taxon>
        <taxon>Euteleostomi</taxon>
        <taxon>Archelosauria</taxon>
        <taxon>Archosauria</taxon>
        <taxon>Dinosauria</taxon>
        <taxon>Saurischia</taxon>
        <taxon>Theropoda</taxon>
        <taxon>Coelurosauria</taxon>
        <taxon>Aves</taxon>
        <taxon>Neognathae</taxon>
        <taxon>Galloanserae</taxon>
        <taxon>Galliformes</taxon>
        <taxon>Phasianidae</taxon>
        <taxon>Meleagridinae</taxon>
        <taxon>Meleagris</taxon>
    </lineage>
</organism>
<dbReference type="EMBL" id="M91285">
    <property type="protein sequence ID" value="AAA49634.1"/>
    <property type="molecule type" value="Genomic_DNA"/>
</dbReference>
<dbReference type="SMR" id="P28129"/>
<dbReference type="GlyCosmos" id="P28129">
    <property type="glycosylation" value="1 site, No reported glycans"/>
</dbReference>
<dbReference type="HOGENOM" id="CLU_033039_1_4_1"/>
<dbReference type="InParanoid" id="P28129"/>
<dbReference type="OrthoDB" id="5945655at2759"/>
<dbReference type="Proteomes" id="UP000001645">
    <property type="component" value="Unplaced"/>
</dbReference>
<dbReference type="GO" id="GO:0005615">
    <property type="term" value="C:extracellular space"/>
    <property type="evidence" value="ECO:0007669"/>
    <property type="project" value="TreeGrafter"/>
</dbReference>
<dbReference type="GO" id="GO:0005125">
    <property type="term" value="F:cytokine activity"/>
    <property type="evidence" value="ECO:0007669"/>
    <property type="project" value="TreeGrafter"/>
</dbReference>
<dbReference type="GO" id="GO:0005109">
    <property type="term" value="F:frizzled binding"/>
    <property type="evidence" value="ECO:0007669"/>
    <property type="project" value="TreeGrafter"/>
</dbReference>
<dbReference type="GO" id="GO:0048513">
    <property type="term" value="P:animal organ development"/>
    <property type="evidence" value="ECO:0007669"/>
    <property type="project" value="UniProtKB-ARBA"/>
</dbReference>
<dbReference type="GO" id="GO:0060070">
    <property type="term" value="P:canonical Wnt signaling pathway"/>
    <property type="evidence" value="ECO:0007669"/>
    <property type="project" value="TreeGrafter"/>
</dbReference>
<dbReference type="GO" id="GO:0045165">
    <property type="term" value="P:cell fate commitment"/>
    <property type="evidence" value="ECO:0007669"/>
    <property type="project" value="TreeGrafter"/>
</dbReference>
<dbReference type="GO" id="GO:0030182">
    <property type="term" value="P:neuron differentiation"/>
    <property type="evidence" value="ECO:0007669"/>
    <property type="project" value="TreeGrafter"/>
</dbReference>
<dbReference type="GO" id="GO:0046330">
    <property type="term" value="P:positive regulation of JNK cascade"/>
    <property type="evidence" value="ECO:0007669"/>
    <property type="project" value="TreeGrafter"/>
</dbReference>
<dbReference type="Gene3D" id="3.30.2460.20">
    <property type="match status" value="1"/>
</dbReference>
<dbReference type="InterPro" id="IPR005817">
    <property type="entry name" value="Wnt"/>
</dbReference>
<dbReference type="InterPro" id="IPR013300">
    <property type="entry name" value="Wnt7"/>
</dbReference>
<dbReference type="InterPro" id="IPR043158">
    <property type="entry name" value="Wnt_C"/>
</dbReference>
<dbReference type="PANTHER" id="PTHR12027:SF78">
    <property type="entry name" value="PROTEIN WNT-7A"/>
    <property type="match status" value="1"/>
</dbReference>
<dbReference type="PANTHER" id="PTHR12027">
    <property type="entry name" value="WNT RELATED"/>
    <property type="match status" value="1"/>
</dbReference>
<dbReference type="Pfam" id="PF00110">
    <property type="entry name" value="wnt"/>
    <property type="match status" value="1"/>
</dbReference>
<dbReference type="PRINTS" id="PR01891">
    <property type="entry name" value="WNT7PROTEIN"/>
</dbReference>
<dbReference type="SMART" id="SM00097">
    <property type="entry name" value="WNT1"/>
    <property type="match status" value="1"/>
</dbReference>
<comment type="function">
    <text evidence="1 2">Ligand for members of the frizzled family of seven transmembrane receptors that functions in the canonical Wnt/beta-catenin signaling pathway (By similarity). Plays an important role in embryonic development, including dorsal versus ventral patterning during limb development, skeleton development and urogenital tract development. Required for central nervous system (CNS) angiogenesis and blood-brain barrier regulation (By similarity).</text>
</comment>
<comment type="subunit">
    <text evidence="1 2">Forms a soluble 1:1 complex with AFM; this prevents oligomerization and is required for prolonged biological activity. The complex with AFM may represent the physiological form in body fluids (By similarity). Interacts with FZD5. Interacts with PORCN (By similarity).</text>
</comment>
<comment type="subcellular location">
    <subcellularLocation>
        <location evidence="2">Secreted</location>
        <location evidence="2">Extracellular space</location>
        <location evidence="2">Extracellular matrix</location>
    </subcellularLocation>
    <subcellularLocation>
        <location evidence="2">Secreted</location>
    </subcellularLocation>
</comment>
<comment type="PTM">
    <text evidence="3 5">Palmitoleoylation is required for efficient binding to frizzled receptors. Depalmitoleoylation leads to Wnt signaling pathway inhibition.</text>
</comment>
<comment type="similarity">
    <text evidence="7">Belongs to the Wnt family.</text>
</comment>
<sequence length="123" mass="14122">SGSCTTKTCWTTLPKFRELGYILKDKYNEAVQVEPVRASRNKRPTFLKIKKPLSYRKPMDTDLVYIEKSPNYCEEDPVTGSVGTQGRMCNKTAQQSNGCDLMCCGRGYNTHQYSRVWQCNCKF</sequence>
<keyword id="KW-0217">Developmental protein</keyword>
<keyword id="KW-1015">Disulfide bond</keyword>
<keyword id="KW-0272">Extracellular matrix</keyword>
<keyword id="KW-0325">Glycoprotein</keyword>
<keyword id="KW-0449">Lipoprotein</keyword>
<keyword id="KW-1185">Reference proteome</keyword>
<keyword id="KW-0964">Secreted</keyword>
<keyword id="KW-0879">Wnt signaling pathway</keyword>